<gene>
    <name evidence="2" type="primary">ADA2</name>
    <name type="ORF">DDB_G0275179</name>
</gene>
<proteinExistence type="evidence at transcript level"/>
<keyword id="KW-0325">Glycoprotein</keyword>
<keyword id="KW-0378">Hydrolase</keyword>
<keyword id="KW-0479">Metal-binding</keyword>
<keyword id="KW-1185">Reference proteome</keyword>
<keyword id="KW-0964">Secreted</keyword>
<keyword id="KW-0732">Signal</keyword>
<keyword id="KW-0862">Zinc</keyword>
<name>ADA2_DICDI</name>
<dbReference type="EC" id="3.5.4.4" evidence="2"/>
<dbReference type="EMBL" id="AAFI02000013">
    <property type="protein sequence ID" value="EAL69870.1"/>
    <property type="molecule type" value="Genomic_DNA"/>
</dbReference>
<dbReference type="RefSeq" id="XP_643866.1">
    <property type="nucleotide sequence ID" value="XM_638774.1"/>
</dbReference>
<dbReference type="SMR" id="Q553U5"/>
<dbReference type="FunCoup" id="Q553U5">
    <property type="interactions" value="42"/>
</dbReference>
<dbReference type="STRING" id="44689.Q553U5"/>
<dbReference type="GlyCosmos" id="Q553U5">
    <property type="glycosylation" value="7 sites, No reported glycans"/>
</dbReference>
<dbReference type="GlyGen" id="Q553U5">
    <property type="glycosylation" value="7 sites"/>
</dbReference>
<dbReference type="PaxDb" id="44689-DDB0230172"/>
<dbReference type="EnsemblProtists" id="EAL69870">
    <property type="protein sequence ID" value="EAL69870"/>
    <property type="gene ID" value="DDB_G0275179"/>
</dbReference>
<dbReference type="GeneID" id="8619917"/>
<dbReference type="KEGG" id="ddi:DDB_G0275179"/>
<dbReference type="dictyBase" id="DDB_G0275179"/>
<dbReference type="VEuPathDB" id="AmoebaDB:DDB_G0275179"/>
<dbReference type="eggNOG" id="KOG1097">
    <property type="taxonomic scope" value="Eukaryota"/>
</dbReference>
<dbReference type="HOGENOM" id="CLU_022829_3_0_1"/>
<dbReference type="InParanoid" id="Q553U5"/>
<dbReference type="OMA" id="SMKQCIE"/>
<dbReference type="PhylomeDB" id="Q553U5"/>
<dbReference type="Reactome" id="R-DDI-5683826">
    <property type="pathway name" value="Surfactant metabolism"/>
</dbReference>
<dbReference type="Reactome" id="R-DDI-6798695">
    <property type="pathway name" value="Neutrophil degranulation"/>
</dbReference>
<dbReference type="PRO" id="PR:Q553U5"/>
<dbReference type="Proteomes" id="UP000002195">
    <property type="component" value="Chromosome 2"/>
</dbReference>
<dbReference type="GO" id="GO:0005615">
    <property type="term" value="C:extracellular space"/>
    <property type="evidence" value="ECO:0007669"/>
    <property type="project" value="InterPro"/>
</dbReference>
<dbReference type="GO" id="GO:0004000">
    <property type="term" value="F:adenosine deaminase activity"/>
    <property type="evidence" value="ECO:0000318"/>
    <property type="project" value="GO_Central"/>
</dbReference>
<dbReference type="GO" id="GO:0046872">
    <property type="term" value="F:metal ion binding"/>
    <property type="evidence" value="ECO:0007669"/>
    <property type="project" value="UniProtKB-KW"/>
</dbReference>
<dbReference type="GO" id="GO:0006154">
    <property type="term" value="P:adenosine catabolic process"/>
    <property type="evidence" value="ECO:0000318"/>
    <property type="project" value="GO_Central"/>
</dbReference>
<dbReference type="GO" id="GO:0046103">
    <property type="term" value="P:inosine biosynthetic process"/>
    <property type="evidence" value="ECO:0000318"/>
    <property type="project" value="GO_Central"/>
</dbReference>
<dbReference type="CDD" id="cd01321">
    <property type="entry name" value="ADGF"/>
    <property type="match status" value="1"/>
</dbReference>
<dbReference type="FunFam" id="3.20.20.140:FF:000017">
    <property type="entry name" value="Adenosine deaminase 2"/>
    <property type="match status" value="1"/>
</dbReference>
<dbReference type="Gene3D" id="3.20.20.140">
    <property type="entry name" value="Metal-dependent hydrolases"/>
    <property type="match status" value="1"/>
</dbReference>
<dbReference type="InterPro" id="IPR001365">
    <property type="entry name" value="A_deaminase_dom"/>
</dbReference>
<dbReference type="InterPro" id="IPR013659">
    <property type="entry name" value="A_deaminase_N"/>
</dbReference>
<dbReference type="InterPro" id="IPR006331">
    <property type="entry name" value="ADGF"/>
</dbReference>
<dbReference type="InterPro" id="IPR006330">
    <property type="entry name" value="Ado/ade_deaminase"/>
</dbReference>
<dbReference type="InterPro" id="IPR032466">
    <property type="entry name" value="Metal_Hydrolase"/>
</dbReference>
<dbReference type="NCBIfam" id="TIGR01431">
    <property type="entry name" value="adm_rel"/>
    <property type="match status" value="1"/>
</dbReference>
<dbReference type="PANTHER" id="PTHR11409">
    <property type="entry name" value="ADENOSINE DEAMINASE"/>
    <property type="match status" value="1"/>
</dbReference>
<dbReference type="PANTHER" id="PTHR11409:SF39">
    <property type="entry name" value="ADENOSINE DEAMINASE 2"/>
    <property type="match status" value="1"/>
</dbReference>
<dbReference type="Pfam" id="PF00962">
    <property type="entry name" value="A_deaminase"/>
    <property type="match status" value="1"/>
</dbReference>
<dbReference type="Pfam" id="PF08451">
    <property type="entry name" value="A_deaminase_N"/>
    <property type="match status" value="1"/>
</dbReference>
<dbReference type="SUPFAM" id="SSF51556">
    <property type="entry name" value="Metallo-dependent hydrolases"/>
    <property type="match status" value="1"/>
</dbReference>
<accession>Q553U5</accession>
<accession>Q86I77</accession>
<protein>
    <recommendedName>
        <fullName evidence="2">Adenosine deaminase 2</fullName>
        <ecNumber evidence="2">3.5.4.4</ecNumber>
    </recommendedName>
</protein>
<reference key="1">
    <citation type="journal article" date="2002" name="Nature">
        <title>Sequence and analysis of chromosome 2 of Dictyostelium discoideum.</title>
        <authorList>
            <person name="Gloeckner G."/>
            <person name="Eichinger L."/>
            <person name="Szafranski K."/>
            <person name="Pachebat J.A."/>
            <person name="Bankier A.T."/>
            <person name="Dear P.H."/>
            <person name="Lehmann R."/>
            <person name="Baumgart C."/>
            <person name="Parra G."/>
            <person name="Abril J.F."/>
            <person name="Guigo R."/>
            <person name="Kumpf K."/>
            <person name="Tunggal B."/>
            <person name="Cox E.C."/>
            <person name="Quail M.A."/>
            <person name="Platzer M."/>
            <person name="Rosenthal A."/>
            <person name="Noegel A.A."/>
        </authorList>
    </citation>
    <scope>NUCLEOTIDE SEQUENCE [LARGE SCALE GENOMIC DNA]</scope>
    <source>
        <strain>AX4</strain>
    </source>
</reference>
<reference key="2">
    <citation type="journal article" date="2005" name="Nature">
        <title>The genome of the social amoeba Dictyostelium discoideum.</title>
        <authorList>
            <person name="Eichinger L."/>
            <person name="Pachebat J.A."/>
            <person name="Gloeckner G."/>
            <person name="Rajandream M.A."/>
            <person name="Sucgang R."/>
            <person name="Berriman M."/>
            <person name="Song J."/>
            <person name="Olsen R."/>
            <person name="Szafranski K."/>
            <person name="Xu Q."/>
            <person name="Tunggal B."/>
            <person name="Kummerfeld S."/>
            <person name="Madera M."/>
            <person name="Konfortov B.A."/>
            <person name="Rivero F."/>
            <person name="Bankier A.T."/>
            <person name="Lehmann R."/>
            <person name="Hamlin N."/>
            <person name="Davies R."/>
            <person name="Gaudet P."/>
            <person name="Fey P."/>
            <person name="Pilcher K."/>
            <person name="Chen G."/>
            <person name="Saunders D."/>
            <person name="Sodergren E.J."/>
            <person name="Davis P."/>
            <person name="Kerhornou A."/>
            <person name="Nie X."/>
            <person name="Hall N."/>
            <person name="Anjard C."/>
            <person name="Hemphill L."/>
            <person name="Bason N."/>
            <person name="Farbrother P."/>
            <person name="Desany B."/>
            <person name="Just E."/>
            <person name="Morio T."/>
            <person name="Rost R."/>
            <person name="Churcher C.M."/>
            <person name="Cooper J."/>
            <person name="Haydock S."/>
            <person name="van Driessche N."/>
            <person name="Cronin A."/>
            <person name="Goodhead I."/>
            <person name="Muzny D.M."/>
            <person name="Mourier T."/>
            <person name="Pain A."/>
            <person name="Lu M."/>
            <person name="Harper D."/>
            <person name="Lindsay R."/>
            <person name="Hauser H."/>
            <person name="James K.D."/>
            <person name="Quiles M."/>
            <person name="Madan Babu M."/>
            <person name="Saito T."/>
            <person name="Buchrieser C."/>
            <person name="Wardroper A."/>
            <person name="Felder M."/>
            <person name="Thangavelu M."/>
            <person name="Johnson D."/>
            <person name="Knights A."/>
            <person name="Loulseged H."/>
            <person name="Mungall K.L."/>
            <person name="Oliver K."/>
            <person name="Price C."/>
            <person name="Quail M.A."/>
            <person name="Urushihara H."/>
            <person name="Hernandez J."/>
            <person name="Rabbinowitsch E."/>
            <person name="Steffen D."/>
            <person name="Sanders M."/>
            <person name="Ma J."/>
            <person name="Kohara Y."/>
            <person name="Sharp S."/>
            <person name="Simmonds M.N."/>
            <person name="Spiegler S."/>
            <person name="Tivey A."/>
            <person name="Sugano S."/>
            <person name="White B."/>
            <person name="Walker D."/>
            <person name="Woodward J.R."/>
            <person name="Winckler T."/>
            <person name="Tanaka Y."/>
            <person name="Shaulsky G."/>
            <person name="Schleicher M."/>
            <person name="Weinstock G.M."/>
            <person name="Rosenthal A."/>
            <person name="Cox E.C."/>
            <person name="Chisholm R.L."/>
            <person name="Gibbs R.A."/>
            <person name="Loomis W.F."/>
            <person name="Platzer M."/>
            <person name="Kay R.R."/>
            <person name="Williams J.G."/>
            <person name="Dear P.H."/>
            <person name="Noegel A.A."/>
            <person name="Barrell B.G."/>
            <person name="Kuspa A."/>
        </authorList>
    </citation>
    <scope>NUCLEOTIDE SEQUENCE [LARGE SCALE GENOMIC DNA]</scope>
    <source>
        <strain>AX4</strain>
    </source>
</reference>
<feature type="signal peptide" evidence="3">
    <location>
        <begin position="1"/>
        <end position="26"/>
    </location>
</feature>
<feature type="chain" id="PRO_0000331430" description="Adenosine deaminase 2">
    <location>
        <begin position="27"/>
        <end position="543"/>
    </location>
</feature>
<feature type="region of interest" description="Disordered" evidence="4">
    <location>
        <begin position="31"/>
        <end position="58"/>
    </location>
</feature>
<feature type="compositionally biased region" description="Low complexity" evidence="4">
    <location>
        <begin position="31"/>
        <end position="54"/>
    </location>
</feature>
<feature type="active site" description="Proton donor" evidence="1">
    <location>
        <position position="392"/>
    </location>
</feature>
<feature type="active site" description="Proton acceptor" evidence="1">
    <location>
        <position position="414"/>
    </location>
</feature>
<feature type="binding site" evidence="1">
    <location>
        <position position="144"/>
    </location>
    <ligand>
        <name>Zn(2+)</name>
        <dbReference type="ChEBI" id="CHEBI:29105"/>
        <note>catalytic</note>
    </ligand>
</feature>
<feature type="binding site" evidence="1">
    <location>
        <position position="146"/>
    </location>
    <ligand>
        <name>Zn(2+)</name>
        <dbReference type="ChEBI" id="CHEBI:29105"/>
        <note>catalytic</note>
    </ligand>
</feature>
<feature type="binding site" evidence="1">
    <location>
        <begin position="232"/>
        <end position="239"/>
    </location>
    <ligand>
        <name>substrate</name>
    </ligand>
</feature>
<feature type="binding site" evidence="1">
    <location>
        <position position="355"/>
    </location>
    <ligand>
        <name>substrate</name>
    </ligand>
</feature>
<feature type="binding site" evidence="1">
    <location>
        <position position="389"/>
    </location>
    <ligand>
        <name>Zn(2+)</name>
        <dbReference type="ChEBI" id="CHEBI:29105"/>
        <note>catalytic</note>
    </ligand>
</feature>
<feature type="binding site" evidence="1">
    <location>
        <position position="471"/>
    </location>
    <ligand>
        <name>Zn(2+)</name>
        <dbReference type="ChEBI" id="CHEBI:29105"/>
        <note>catalytic</note>
    </ligand>
</feature>
<feature type="binding site" evidence="1">
    <location>
        <position position="472"/>
    </location>
    <ligand>
        <name>substrate</name>
    </ligand>
</feature>
<feature type="glycosylation site" description="N-linked (GlcNAc...) asparagine" evidence="3">
    <location>
        <position position="126"/>
    </location>
</feature>
<feature type="glycosylation site" description="N-linked (GlcNAc...) asparagine" evidence="3">
    <location>
        <position position="179"/>
    </location>
</feature>
<feature type="glycosylation site" description="N-linked (GlcNAc...) asparagine" evidence="3">
    <location>
        <position position="309"/>
    </location>
</feature>
<feature type="glycosylation site" description="N-linked (GlcNAc...) asparagine" evidence="3">
    <location>
        <position position="326"/>
    </location>
</feature>
<feature type="glycosylation site" description="N-linked (GlcNAc...) asparagine" evidence="3">
    <location>
        <position position="397"/>
    </location>
</feature>
<feature type="glycosylation site" description="N-linked (GlcNAc...) asparagine" evidence="3">
    <location>
        <position position="508"/>
    </location>
</feature>
<feature type="glycosylation site" description="N-linked (GlcNAc...) asparagine" evidence="3">
    <location>
        <position position="514"/>
    </location>
</feature>
<organism>
    <name type="scientific">Dictyostelium discoideum</name>
    <name type="common">Social amoeba</name>
    <dbReference type="NCBI Taxonomy" id="44689"/>
    <lineage>
        <taxon>Eukaryota</taxon>
        <taxon>Amoebozoa</taxon>
        <taxon>Evosea</taxon>
        <taxon>Eumycetozoa</taxon>
        <taxon>Dictyostelia</taxon>
        <taxon>Dictyosteliales</taxon>
        <taxon>Dictyosteliaceae</taxon>
        <taxon>Dictyostelium</taxon>
    </lineage>
</organism>
<sequence>MFLKFKNIFFIVLTLSIVFNGLIVNSKNIHINNKNNNNNNNNKDLSSSESGSSSDINPYISQYNSERETLVNQENQIKLGSNTPFNSKEQQANTIFLNILQNEELSFSNNDPSGVNFFIEKQIIENESTIFKIIQNMPKGSALHVHQDSSATYDYLISVGSYLPNCYIYLTYDVNDANNGTFHFYDSQPTDSNWKLLSTIREGVSNVESFDQQLLDSLTLIGQDYGDYVSLWRKFDGIFGRVNGLVTYLPIATGYMEHLFQQMIQDGVQHIEVRKCFGDFYDLTGKIYDDYWFVQTMEELVLTTRQKYNMSEFALKIIGCNGRHNNQSVVYDAMVMSLDLRNKYPSTFVGYDLVGPEDEGYPLIYFIEQFAEIKKLGYQYQYPLDYYFHAGETILYNNTNLYDAILLNTKRIGHGIQLPKHPLLMDLVLKNDIGIEICPISNQILQYVSDMRAHPGLDLLNRGLPVTISPDDPAIFNYGGLSYDFFELTYSWGLNLQQLKQLAINSINHSNTFNQSEYNLLYNAWEVKWFNFIDYIINTYSNI</sequence>
<evidence type="ECO:0000250" key="1"/>
<evidence type="ECO:0000250" key="2">
    <source>
        <dbReference type="UniProtKB" id="Q9NZK5"/>
    </source>
</evidence>
<evidence type="ECO:0000255" key="3"/>
<evidence type="ECO:0000256" key="4">
    <source>
        <dbReference type="SAM" id="MobiDB-lite"/>
    </source>
</evidence>
<evidence type="ECO:0000305" key="5"/>
<comment type="function">
    <text evidence="1">Adenosine deaminase that may contribute to the degradation of extracellular adenosine, a signaling molecule that controls a variety of cellular responses. May play a role in the regulation of cell proliferation (By similarity).</text>
</comment>
<comment type="catalytic activity">
    <reaction>
        <text>adenosine + H2O + H(+) = inosine + NH4(+)</text>
        <dbReference type="Rhea" id="RHEA:24408"/>
        <dbReference type="ChEBI" id="CHEBI:15377"/>
        <dbReference type="ChEBI" id="CHEBI:15378"/>
        <dbReference type="ChEBI" id="CHEBI:16335"/>
        <dbReference type="ChEBI" id="CHEBI:17596"/>
        <dbReference type="ChEBI" id="CHEBI:28938"/>
        <dbReference type="EC" id="3.5.4.4"/>
    </reaction>
</comment>
<comment type="cofactor">
    <cofactor evidence="1">
        <name>Zn(2+)</name>
        <dbReference type="ChEBI" id="CHEBI:29105"/>
    </cofactor>
    <text evidence="1">Binds 1 zinc ion per subunit.</text>
</comment>
<comment type="subcellular location">
    <subcellularLocation>
        <location evidence="1">Secreted</location>
    </subcellularLocation>
</comment>
<comment type="similarity">
    <text evidence="5">Belongs to the metallo-dependent hydrolases superfamily. Adenosine and AMP deaminases family. ADGF subfamily.</text>
</comment>